<dbReference type="EC" id="5.2.1.8" evidence="1"/>
<dbReference type="EMBL" id="CP000097">
    <property type="protein sequence ID" value="ABB25038.1"/>
    <property type="molecule type" value="Genomic_DNA"/>
</dbReference>
<dbReference type="RefSeq" id="WP_011358905.1">
    <property type="nucleotide sequence ID" value="NC_007513.1"/>
</dbReference>
<dbReference type="SMR" id="Q3B0U0"/>
<dbReference type="STRING" id="316279.Syncc9902_0063"/>
<dbReference type="KEGG" id="sye:Syncc9902_0063"/>
<dbReference type="eggNOG" id="COG0544">
    <property type="taxonomic scope" value="Bacteria"/>
</dbReference>
<dbReference type="HOGENOM" id="CLU_033058_3_1_3"/>
<dbReference type="OrthoDB" id="9767721at2"/>
<dbReference type="Proteomes" id="UP000002712">
    <property type="component" value="Chromosome"/>
</dbReference>
<dbReference type="GO" id="GO:0005737">
    <property type="term" value="C:cytoplasm"/>
    <property type="evidence" value="ECO:0007669"/>
    <property type="project" value="UniProtKB-SubCell"/>
</dbReference>
<dbReference type="GO" id="GO:0003755">
    <property type="term" value="F:peptidyl-prolyl cis-trans isomerase activity"/>
    <property type="evidence" value="ECO:0007669"/>
    <property type="project" value="UniProtKB-UniRule"/>
</dbReference>
<dbReference type="GO" id="GO:0044183">
    <property type="term" value="F:protein folding chaperone"/>
    <property type="evidence" value="ECO:0007669"/>
    <property type="project" value="TreeGrafter"/>
</dbReference>
<dbReference type="GO" id="GO:0043022">
    <property type="term" value="F:ribosome binding"/>
    <property type="evidence" value="ECO:0007669"/>
    <property type="project" value="TreeGrafter"/>
</dbReference>
<dbReference type="GO" id="GO:0051083">
    <property type="term" value="P:'de novo' cotranslational protein folding"/>
    <property type="evidence" value="ECO:0007669"/>
    <property type="project" value="TreeGrafter"/>
</dbReference>
<dbReference type="GO" id="GO:0051301">
    <property type="term" value="P:cell division"/>
    <property type="evidence" value="ECO:0007669"/>
    <property type="project" value="UniProtKB-KW"/>
</dbReference>
<dbReference type="GO" id="GO:0061077">
    <property type="term" value="P:chaperone-mediated protein folding"/>
    <property type="evidence" value="ECO:0007669"/>
    <property type="project" value="TreeGrafter"/>
</dbReference>
<dbReference type="GO" id="GO:0015031">
    <property type="term" value="P:protein transport"/>
    <property type="evidence" value="ECO:0007669"/>
    <property type="project" value="UniProtKB-UniRule"/>
</dbReference>
<dbReference type="GO" id="GO:0043335">
    <property type="term" value="P:protein unfolding"/>
    <property type="evidence" value="ECO:0007669"/>
    <property type="project" value="TreeGrafter"/>
</dbReference>
<dbReference type="FunFam" id="3.10.50.40:FF:000001">
    <property type="entry name" value="Trigger factor"/>
    <property type="match status" value="1"/>
</dbReference>
<dbReference type="FunFam" id="3.30.70.1050:FF:000004">
    <property type="entry name" value="Trigger factor"/>
    <property type="match status" value="1"/>
</dbReference>
<dbReference type="Gene3D" id="3.10.50.40">
    <property type="match status" value="1"/>
</dbReference>
<dbReference type="Gene3D" id="3.30.70.1050">
    <property type="entry name" value="Trigger factor ribosome-binding domain"/>
    <property type="match status" value="1"/>
</dbReference>
<dbReference type="Gene3D" id="1.10.3120.10">
    <property type="entry name" value="Trigger factor, C-terminal domain"/>
    <property type="match status" value="1"/>
</dbReference>
<dbReference type="HAMAP" id="MF_00303">
    <property type="entry name" value="Trigger_factor_Tig"/>
    <property type="match status" value="1"/>
</dbReference>
<dbReference type="InterPro" id="IPR046357">
    <property type="entry name" value="PPIase_dom_sf"/>
</dbReference>
<dbReference type="InterPro" id="IPR001179">
    <property type="entry name" value="PPIase_FKBP_dom"/>
</dbReference>
<dbReference type="InterPro" id="IPR005215">
    <property type="entry name" value="Trig_fac"/>
</dbReference>
<dbReference type="InterPro" id="IPR008880">
    <property type="entry name" value="Trigger_fac_C"/>
</dbReference>
<dbReference type="InterPro" id="IPR037041">
    <property type="entry name" value="Trigger_fac_C_sf"/>
</dbReference>
<dbReference type="InterPro" id="IPR008881">
    <property type="entry name" value="Trigger_fac_ribosome-bd_bac"/>
</dbReference>
<dbReference type="InterPro" id="IPR036611">
    <property type="entry name" value="Trigger_fac_ribosome-bd_sf"/>
</dbReference>
<dbReference type="InterPro" id="IPR027304">
    <property type="entry name" value="Trigger_fact/SurA_dom_sf"/>
</dbReference>
<dbReference type="NCBIfam" id="TIGR00115">
    <property type="entry name" value="tig"/>
    <property type="match status" value="1"/>
</dbReference>
<dbReference type="PANTHER" id="PTHR30560">
    <property type="entry name" value="TRIGGER FACTOR CHAPERONE AND PEPTIDYL-PROLYL CIS/TRANS ISOMERASE"/>
    <property type="match status" value="1"/>
</dbReference>
<dbReference type="PANTHER" id="PTHR30560:SF3">
    <property type="entry name" value="TRIGGER FACTOR-LIKE PROTEIN TIG, CHLOROPLASTIC"/>
    <property type="match status" value="1"/>
</dbReference>
<dbReference type="Pfam" id="PF00254">
    <property type="entry name" value="FKBP_C"/>
    <property type="match status" value="1"/>
</dbReference>
<dbReference type="Pfam" id="PF05698">
    <property type="entry name" value="Trigger_C"/>
    <property type="match status" value="1"/>
</dbReference>
<dbReference type="Pfam" id="PF05697">
    <property type="entry name" value="Trigger_N"/>
    <property type="match status" value="1"/>
</dbReference>
<dbReference type="PIRSF" id="PIRSF003095">
    <property type="entry name" value="Trigger_factor"/>
    <property type="match status" value="1"/>
</dbReference>
<dbReference type="SUPFAM" id="SSF54534">
    <property type="entry name" value="FKBP-like"/>
    <property type="match status" value="1"/>
</dbReference>
<dbReference type="SUPFAM" id="SSF109998">
    <property type="entry name" value="Triger factor/SurA peptide-binding domain-like"/>
    <property type="match status" value="1"/>
</dbReference>
<dbReference type="SUPFAM" id="SSF102735">
    <property type="entry name" value="Trigger factor ribosome-binding domain"/>
    <property type="match status" value="1"/>
</dbReference>
<dbReference type="PROSITE" id="PS50059">
    <property type="entry name" value="FKBP_PPIASE"/>
    <property type="match status" value="1"/>
</dbReference>
<reference key="1">
    <citation type="submission" date="2005-08" db="EMBL/GenBank/DDBJ databases">
        <title>Complete sequence of Synechococcus sp. CC9902.</title>
        <authorList>
            <person name="Copeland A."/>
            <person name="Lucas S."/>
            <person name="Lapidus A."/>
            <person name="Barry K."/>
            <person name="Detter J.C."/>
            <person name="Glavina T."/>
            <person name="Hammon N."/>
            <person name="Israni S."/>
            <person name="Pitluck S."/>
            <person name="Martinez M."/>
            <person name="Schmutz J."/>
            <person name="Larimer F."/>
            <person name="Land M."/>
            <person name="Kyrpides N."/>
            <person name="Ivanova N."/>
            <person name="Richardson P."/>
        </authorList>
    </citation>
    <scope>NUCLEOTIDE SEQUENCE [LARGE SCALE GENOMIC DNA]</scope>
    <source>
        <strain>CC9902</strain>
    </source>
</reference>
<protein>
    <recommendedName>
        <fullName evidence="1">Trigger factor</fullName>
        <shortName evidence="1">TF</shortName>
        <ecNumber evidence="1">5.2.1.8</ecNumber>
    </recommendedName>
    <alternativeName>
        <fullName evidence="1">PPIase</fullName>
    </alternativeName>
</protein>
<proteinExistence type="inferred from homology"/>
<evidence type="ECO:0000255" key="1">
    <source>
        <dbReference type="HAMAP-Rule" id="MF_00303"/>
    </source>
</evidence>
<sequence>MSAATLKVSTESRPSSRLAVTVTVPGERCTASYEEAIKSLSRSINLPGFRKGKVPRSVLVQQLGGVRIKATALEKLIDSAWRDAIKQESLEPISQPDLSSGFDGLLESFNPGDELTFTLEADVAPTPKLKSTKGLKAEYEAVVYDASRVDSMIEDSRKQLATVVPVEGRAAEKGDIAVLGFKGTYSDDGSEIEGGSADSMDVDLDNGRMIPGFIEGVIGMKVGESKSVDCQFPDDYPKEDARGRKAAFAIELKDLKTRELPELDDAFAKQASEQDTMADLRKDLEQRLKDDAERRQTSNRNDGLVKALVEQLEVDLPEALIQQESRNLVEQTAAQFAQQGMDVKSLFTPDLIRNLMQNSRPEAEERLRRSFALTALAEAEDIKLDDSAIDTKLKEVKKDLSADAKVDPERLRQAVMDDLMQEQLMSWLETNSTLTEKAPEPESDTKS</sequence>
<organism>
    <name type="scientific">Synechococcus sp. (strain CC9902)</name>
    <dbReference type="NCBI Taxonomy" id="316279"/>
    <lineage>
        <taxon>Bacteria</taxon>
        <taxon>Bacillati</taxon>
        <taxon>Cyanobacteriota</taxon>
        <taxon>Cyanophyceae</taxon>
        <taxon>Synechococcales</taxon>
        <taxon>Synechococcaceae</taxon>
        <taxon>Synechococcus</taxon>
    </lineage>
</organism>
<gene>
    <name evidence="1" type="primary">tig</name>
    <name type="ordered locus">Syncc9902_0063</name>
</gene>
<accession>Q3B0U0</accession>
<keyword id="KW-0131">Cell cycle</keyword>
<keyword id="KW-0132">Cell division</keyword>
<keyword id="KW-0143">Chaperone</keyword>
<keyword id="KW-0963">Cytoplasm</keyword>
<keyword id="KW-0413">Isomerase</keyword>
<keyword id="KW-1185">Reference proteome</keyword>
<keyword id="KW-0697">Rotamase</keyword>
<name>TIG_SYNS9</name>
<comment type="function">
    <text evidence="1">Involved in protein export. Acts as a chaperone by maintaining the newly synthesized protein in an open conformation. Functions as a peptidyl-prolyl cis-trans isomerase.</text>
</comment>
<comment type="catalytic activity">
    <reaction evidence="1">
        <text>[protein]-peptidylproline (omega=180) = [protein]-peptidylproline (omega=0)</text>
        <dbReference type="Rhea" id="RHEA:16237"/>
        <dbReference type="Rhea" id="RHEA-COMP:10747"/>
        <dbReference type="Rhea" id="RHEA-COMP:10748"/>
        <dbReference type="ChEBI" id="CHEBI:83833"/>
        <dbReference type="ChEBI" id="CHEBI:83834"/>
        <dbReference type="EC" id="5.2.1.8"/>
    </reaction>
</comment>
<comment type="subcellular location">
    <subcellularLocation>
        <location>Cytoplasm</location>
    </subcellularLocation>
    <text evidence="1">About half TF is bound to the ribosome near the polypeptide exit tunnel while the other half is free in the cytoplasm.</text>
</comment>
<comment type="domain">
    <text evidence="1">Consists of 3 domains; the N-terminus binds the ribosome, the middle domain has PPIase activity, while the C-terminus has intrinsic chaperone activity on its own.</text>
</comment>
<comment type="similarity">
    <text evidence="1">Belongs to the FKBP-type PPIase family. Tig subfamily.</text>
</comment>
<feature type="chain" id="PRO_0000256632" description="Trigger factor">
    <location>
        <begin position="1"/>
        <end position="447"/>
    </location>
</feature>
<feature type="domain" description="PPIase FKBP-type" evidence="1">
    <location>
        <begin position="174"/>
        <end position="261"/>
    </location>
</feature>